<keyword id="KW-0998">Cell outer membrane</keyword>
<keyword id="KW-0961">Cell wall biogenesis/degradation</keyword>
<keyword id="KW-0456">Lyase</keyword>
<keyword id="KW-0472">Membrane</keyword>
<keyword id="KW-0732">Signal</keyword>
<accession>A6TCH2</accession>
<gene>
    <name evidence="1" type="primary">mltF</name>
    <name type="ordered locus">KPN78578_28320</name>
    <name type="ORF">KPN_02883</name>
</gene>
<protein>
    <recommendedName>
        <fullName evidence="1">Membrane-bound lytic murein transglycosylase F</fullName>
        <ecNumber evidence="1">4.2.2.n1</ecNumber>
    </recommendedName>
    <alternativeName>
        <fullName evidence="1">Murein lyase F</fullName>
    </alternativeName>
</protein>
<feature type="signal peptide" evidence="1">
    <location>
        <begin position="1"/>
        <end position="19"/>
    </location>
</feature>
<feature type="chain" id="PRO_0000353947" description="Membrane-bound lytic murein transglycosylase F">
    <location>
        <begin position="20"/>
        <end position="511"/>
    </location>
</feature>
<feature type="region of interest" description="Non-LT domain" evidence="1">
    <location>
        <begin position="20"/>
        <end position="269"/>
    </location>
</feature>
<feature type="region of interest" description="LT domain" evidence="1">
    <location>
        <begin position="270"/>
        <end position="511"/>
    </location>
</feature>
<feature type="active site" evidence="1">
    <location>
        <position position="314"/>
    </location>
</feature>
<comment type="function">
    <text evidence="1">Murein-degrading enzyme that degrades murein glycan strands and insoluble, high-molecular weight murein sacculi, with the concomitant formation of a 1,6-anhydromuramoyl product. Lytic transglycosylases (LTs) play an integral role in the metabolism of the peptidoglycan (PG) sacculus. Their lytic action creates space within the PG sacculus to allow for its expansion as well as for the insertion of various structures such as secretion systems and flagella.</text>
</comment>
<comment type="catalytic activity">
    <reaction evidence="1">
        <text>Exolytic cleavage of the (1-&gt;4)-beta-glycosidic linkage between N-acetylmuramic acid (MurNAc) and N-acetylglucosamine (GlcNAc) residues in peptidoglycan, from either the reducing or the non-reducing ends of the peptidoglycan chains, with concomitant formation of a 1,6-anhydrobond in the MurNAc residue.</text>
        <dbReference type="EC" id="4.2.2.n1"/>
    </reaction>
</comment>
<comment type="subcellular location">
    <subcellularLocation>
        <location>Cell outer membrane</location>
        <topology>Peripheral membrane protein</topology>
    </subcellularLocation>
    <text evidence="1">Attached to the inner leaflet of the outer membrane.</text>
</comment>
<comment type="domain">
    <text evidence="1">The N-terminal domain does not have lytic activity and probably modulates enzymatic activity. The C-terminal domain is the catalytic active domain.</text>
</comment>
<comment type="similarity">
    <text evidence="1">In the N-terminal section; belongs to the bacterial solute-binding protein 3 family.</text>
</comment>
<comment type="similarity">
    <text evidence="1">In the C-terminal section; belongs to the transglycosylase Slt family.</text>
</comment>
<comment type="sequence caution" evidence="2">
    <conflict type="erroneous initiation">
        <sequence resource="EMBL-CDS" id="ABR78293"/>
    </conflict>
</comment>
<sequence length="511" mass="57908">MKKLKINYLLIGIVTLLLAAALWPSIPWSGKPENRVAGIIARGELRISTINSPMTFATMNNKAFGLDYELAKQFADYLGVTLKITVRQNISQLFDDLDDGQADMLAAGLVYNQERVKNYQAGPTYYSVSQQLVYRVGNTRPRTLAALTAEQLTIAPGHVAINDLQTLKAEKYPDLAWRVDEKRGTTALMQAVIDGKLDYTIADSVAVSLFQRVHPELAVALDITDEQPVTWFSARDDDNSLSAAMLDFFNNINEDGTLARLEEKYLGHGNDFDYVDTRTFLRAVENILPEVQPLFEKYAREIDWRLLAAIAWQESHWDPQATSPTGVRGMMMLTRNTAQSLGLTDRTDAAQSIDGGMRYLQDMMDKVPDSIPKDERIWFALAAYNMGYAHMLDAMALTRKQKGNPNSWADVKLRLPLLSQKPYYSKLKYGYARGHEAYAYVENIRKYQISLVGYLSEKERQQQQTLALAEDYPAVLPNELEQPQETTLPFFKFRADKQMDNARMKLPGHLY</sequence>
<proteinExistence type="inferred from homology"/>
<reference key="1">
    <citation type="submission" date="2006-09" db="EMBL/GenBank/DDBJ databases">
        <authorList>
            <consortium name="The Klebsiella pneumonia Genome Sequencing Project"/>
            <person name="McClelland M."/>
            <person name="Sanderson E.K."/>
            <person name="Spieth J."/>
            <person name="Clifton W.S."/>
            <person name="Latreille P."/>
            <person name="Sabo A."/>
            <person name="Pepin K."/>
            <person name="Bhonagiri V."/>
            <person name="Porwollik S."/>
            <person name="Ali J."/>
            <person name="Wilson R.K."/>
        </authorList>
    </citation>
    <scope>NUCLEOTIDE SEQUENCE [LARGE SCALE GENOMIC DNA]</scope>
    <source>
        <strain>ATCC 700721 / MGH 78578</strain>
    </source>
</reference>
<dbReference type="EC" id="4.2.2.n1" evidence="1"/>
<dbReference type="EMBL" id="CP000647">
    <property type="protein sequence ID" value="ABR78293.1"/>
    <property type="status" value="ALT_INIT"/>
    <property type="molecule type" value="Genomic_DNA"/>
</dbReference>
<dbReference type="SMR" id="A6TCH2"/>
<dbReference type="STRING" id="272620.KPN_02883"/>
<dbReference type="CAZy" id="GH23">
    <property type="family name" value="Glycoside Hydrolase Family 23"/>
</dbReference>
<dbReference type="PaxDb" id="272620-KPN_02883"/>
<dbReference type="EnsemblBacteria" id="ABR78293">
    <property type="protein sequence ID" value="ABR78293"/>
    <property type="gene ID" value="KPN_02883"/>
</dbReference>
<dbReference type="KEGG" id="kpn:KPN_02883"/>
<dbReference type="HOGENOM" id="CLU_027494_0_1_6"/>
<dbReference type="Proteomes" id="UP000000265">
    <property type="component" value="Chromosome"/>
</dbReference>
<dbReference type="GO" id="GO:0009279">
    <property type="term" value="C:cell outer membrane"/>
    <property type="evidence" value="ECO:0007669"/>
    <property type="project" value="UniProtKB-SubCell"/>
</dbReference>
<dbReference type="GO" id="GO:0008933">
    <property type="term" value="F:peptidoglycan lytic transglycosylase activity"/>
    <property type="evidence" value="ECO:0007669"/>
    <property type="project" value="UniProtKB-UniRule"/>
</dbReference>
<dbReference type="GO" id="GO:0016998">
    <property type="term" value="P:cell wall macromolecule catabolic process"/>
    <property type="evidence" value="ECO:0007669"/>
    <property type="project" value="UniProtKB-UniRule"/>
</dbReference>
<dbReference type="GO" id="GO:0071555">
    <property type="term" value="P:cell wall organization"/>
    <property type="evidence" value="ECO:0007669"/>
    <property type="project" value="UniProtKB-KW"/>
</dbReference>
<dbReference type="GO" id="GO:0009253">
    <property type="term" value="P:peptidoglycan catabolic process"/>
    <property type="evidence" value="ECO:0007669"/>
    <property type="project" value="TreeGrafter"/>
</dbReference>
<dbReference type="CDD" id="cd13403">
    <property type="entry name" value="MLTF-like"/>
    <property type="match status" value="1"/>
</dbReference>
<dbReference type="CDD" id="cd01009">
    <property type="entry name" value="PBP2_YfhD_N"/>
    <property type="match status" value="1"/>
</dbReference>
<dbReference type="FunFam" id="1.10.530.10:FF:000003">
    <property type="entry name" value="Membrane-bound lytic murein transglycosylase F"/>
    <property type="match status" value="1"/>
</dbReference>
<dbReference type="FunFam" id="3.40.190.10:FF:000051">
    <property type="entry name" value="Membrane-bound lytic murein transglycosylase F"/>
    <property type="match status" value="1"/>
</dbReference>
<dbReference type="Gene3D" id="1.10.530.10">
    <property type="match status" value="1"/>
</dbReference>
<dbReference type="Gene3D" id="3.40.190.10">
    <property type="entry name" value="Periplasmic binding protein-like II"/>
    <property type="match status" value="2"/>
</dbReference>
<dbReference type="HAMAP" id="MF_02016">
    <property type="entry name" value="MltF"/>
    <property type="match status" value="1"/>
</dbReference>
<dbReference type="InterPro" id="IPR023346">
    <property type="entry name" value="Lysozyme-like_dom_sf"/>
</dbReference>
<dbReference type="InterPro" id="IPR023703">
    <property type="entry name" value="MltF"/>
</dbReference>
<dbReference type="InterPro" id="IPR001638">
    <property type="entry name" value="Solute-binding_3/MltF_N"/>
</dbReference>
<dbReference type="InterPro" id="IPR000189">
    <property type="entry name" value="Transglyc_AS"/>
</dbReference>
<dbReference type="InterPro" id="IPR008258">
    <property type="entry name" value="Transglycosylase_SLT_dom_1"/>
</dbReference>
<dbReference type="NCBIfam" id="NF008112">
    <property type="entry name" value="PRK10859.1"/>
    <property type="match status" value="1"/>
</dbReference>
<dbReference type="PANTHER" id="PTHR35936">
    <property type="entry name" value="MEMBRANE-BOUND LYTIC MUREIN TRANSGLYCOSYLASE F"/>
    <property type="match status" value="1"/>
</dbReference>
<dbReference type="PANTHER" id="PTHR35936:SF32">
    <property type="entry name" value="MEMBRANE-BOUND LYTIC MUREIN TRANSGLYCOSYLASE F"/>
    <property type="match status" value="1"/>
</dbReference>
<dbReference type="Pfam" id="PF00497">
    <property type="entry name" value="SBP_bac_3"/>
    <property type="match status" value="1"/>
</dbReference>
<dbReference type="Pfam" id="PF01464">
    <property type="entry name" value="SLT"/>
    <property type="match status" value="1"/>
</dbReference>
<dbReference type="SMART" id="SM00062">
    <property type="entry name" value="PBPb"/>
    <property type="match status" value="1"/>
</dbReference>
<dbReference type="SUPFAM" id="SSF53955">
    <property type="entry name" value="Lysozyme-like"/>
    <property type="match status" value="1"/>
</dbReference>
<dbReference type="SUPFAM" id="SSF53850">
    <property type="entry name" value="Periplasmic binding protein-like II"/>
    <property type="match status" value="1"/>
</dbReference>
<dbReference type="PROSITE" id="PS00922">
    <property type="entry name" value="TRANSGLYCOSYLASE"/>
    <property type="match status" value="1"/>
</dbReference>
<name>MLTF_KLEP7</name>
<organism>
    <name type="scientific">Klebsiella pneumoniae subsp. pneumoniae (strain ATCC 700721 / MGH 78578)</name>
    <dbReference type="NCBI Taxonomy" id="272620"/>
    <lineage>
        <taxon>Bacteria</taxon>
        <taxon>Pseudomonadati</taxon>
        <taxon>Pseudomonadota</taxon>
        <taxon>Gammaproteobacteria</taxon>
        <taxon>Enterobacterales</taxon>
        <taxon>Enterobacteriaceae</taxon>
        <taxon>Klebsiella/Raoultella group</taxon>
        <taxon>Klebsiella</taxon>
        <taxon>Klebsiella pneumoniae complex</taxon>
    </lineage>
</organism>
<evidence type="ECO:0000255" key="1">
    <source>
        <dbReference type="HAMAP-Rule" id="MF_02016"/>
    </source>
</evidence>
<evidence type="ECO:0000305" key="2"/>